<proteinExistence type="inferred from homology"/>
<reference key="1">
    <citation type="journal article" date="2010" name="BMC Genomics">
        <title>Comparative venom gland transcriptome analysis of the scorpion Lychas mucronatus reveals intraspecific toxic gene diversity and new venomous components.</title>
        <authorList>
            <person name="Zhao R."/>
            <person name="Ma Y."/>
            <person name="He Y."/>
            <person name="Di Z."/>
            <person name="Wu Y.-L."/>
            <person name="Cao Z.-J."/>
            <person name="Li W.-X."/>
        </authorList>
    </citation>
    <scope>NUCLEOTIDE SEQUENCE [MRNA]</scope>
    <source>
        <strain>Hainan</strain>
        <tissue>Venom gland</tissue>
    </source>
</reference>
<reference key="2">
    <citation type="journal article" date="2012" name="PLoS ONE">
        <title>Structural and functional diversity of acidic scorpion potassium channel toxins.</title>
        <authorList>
            <person name="Chen Z.Y."/>
            <person name="Zeng D.Y."/>
            <person name="Hu Y.T."/>
            <person name="He Y.W."/>
            <person name="Pan N."/>
            <person name="Ding J.P."/>
            <person name="Cao Z.J."/>
            <person name="Liu M.L."/>
            <person name="Li W.X."/>
            <person name="Yi H."/>
            <person name="Jiang L."/>
            <person name="Wu Y.L."/>
        </authorList>
    </citation>
    <scope>NUCLEOTIDE SEQUENCE [MRNA]</scope>
    <scope>FUNCTION</scope>
    <source>
        <tissue>Venom gland</tissue>
    </source>
</reference>
<dbReference type="EMBL" id="EU163848">
    <property type="protein sequence ID" value="ABY26657.1"/>
    <property type="molecule type" value="mRNA"/>
</dbReference>
<dbReference type="GO" id="GO:0005576">
    <property type="term" value="C:extracellular region"/>
    <property type="evidence" value="ECO:0007669"/>
    <property type="project" value="UniProtKB-SubCell"/>
</dbReference>
<dbReference type="GO" id="GO:0015459">
    <property type="term" value="F:potassium channel regulator activity"/>
    <property type="evidence" value="ECO:0007669"/>
    <property type="project" value="UniProtKB-KW"/>
</dbReference>
<dbReference type="GO" id="GO:0090729">
    <property type="term" value="F:toxin activity"/>
    <property type="evidence" value="ECO:0007669"/>
    <property type="project" value="UniProtKB-KW"/>
</dbReference>
<feature type="signal peptide" evidence="2">
    <location>
        <begin position="1"/>
        <end position="28"/>
    </location>
</feature>
<feature type="chain" id="PRO_0000403838" description="Potassium channel toxin alpha-KTx 29.1">
    <location>
        <begin position="29"/>
        <end position="60"/>
    </location>
</feature>
<feature type="disulfide bond" evidence="1">
    <location>
        <begin position="32"/>
        <end position="51"/>
    </location>
</feature>
<feature type="disulfide bond" evidence="1">
    <location>
        <begin position="40"/>
        <end position="56"/>
    </location>
</feature>
<feature type="disulfide bond" evidence="1">
    <location>
        <begin position="44"/>
        <end position="58"/>
    </location>
</feature>
<name>KA291_LYCMC</name>
<keyword id="KW-1015">Disulfide bond</keyword>
<keyword id="KW-0872">Ion channel impairing toxin</keyword>
<keyword id="KW-0528">Neurotoxin</keyword>
<keyword id="KW-0632">Potassium channel impairing toxin</keyword>
<keyword id="KW-0964">Secreted</keyword>
<keyword id="KW-0732">Signal</keyword>
<keyword id="KW-0800">Toxin</keyword>
<keyword id="KW-1220">Voltage-gated potassium channel impairing toxin</keyword>
<sequence length="60" mass="6268">MKSVCGVLIILVVLTTMLSISTFSTVGAEGDCPISEAIKCVEKCKEKVEVCEPGVCKCSG</sequence>
<organism>
    <name type="scientific">Lychas mucronatus</name>
    <name type="common">Chinese swimming scorpion</name>
    <dbReference type="NCBI Taxonomy" id="172552"/>
    <lineage>
        <taxon>Eukaryota</taxon>
        <taxon>Metazoa</taxon>
        <taxon>Ecdysozoa</taxon>
        <taxon>Arthropoda</taxon>
        <taxon>Chelicerata</taxon>
        <taxon>Arachnida</taxon>
        <taxon>Scorpiones</taxon>
        <taxon>Buthida</taxon>
        <taxon>Buthoidea</taxon>
        <taxon>Buthidae</taxon>
        <taxon>Lychas</taxon>
    </lineage>
</organism>
<protein>
    <recommendedName>
        <fullName>Potassium channel toxin alpha-KTx 29.1</fullName>
    </recommendedName>
    <alternativeName>
        <fullName>Neurotoxin-F</fullName>
    </alternativeName>
    <alternativeName>
        <fullName>Toxin LmKTx2</fullName>
    </alternativeName>
</protein>
<evidence type="ECO:0000250" key="1"/>
<evidence type="ECO:0000255" key="2"/>
<evidence type="ECO:0000269" key="3">
    <source>
    </source>
</evidence>
<evidence type="ECO:0000305" key="4"/>
<evidence type="ECO:0000305" key="5">
    <source>
    </source>
</evidence>
<accession>D9U2A6</accession>
<comment type="function">
    <text evidence="3">Weakly inhibits the Kv1.3/KCNA3 channel (1 uM of the toxin inhibits currents by 13.2%) and Kv7.1/KCNQ1 channel (10 uM of the toxin inhibits currents by 27.7%).</text>
</comment>
<comment type="subcellular location">
    <subcellularLocation>
        <location evidence="1">Secreted</location>
    </subcellularLocation>
</comment>
<comment type="tissue specificity">
    <text evidence="5">Expressed by the venom gland.</text>
</comment>
<comment type="domain">
    <text evidence="4">Has the structural arrangement of an alpha-helix connected to antiparallel beta-sheets by disulfide bonds (CS-alpha/beta).</text>
</comment>
<comment type="similarity">
    <text evidence="4">Belongs to the short scorpion toxin superfamily. Potassium channel inhibitor family. Alpha-KTx 29 subfamily.</text>
</comment>